<dbReference type="EC" id="1.14.11.-"/>
<dbReference type="EC" id="1.14.11.27"/>
<dbReference type="EMBL" id="CH480819">
    <property type="protein sequence ID" value="EDW53181.1"/>
    <property type="molecule type" value="Genomic_DNA"/>
</dbReference>
<dbReference type="RefSeq" id="XP_002037022.1">
    <property type="nucleotide sequence ID" value="XM_002036986.1"/>
</dbReference>
<dbReference type="SMR" id="B4I100"/>
<dbReference type="STRING" id="7238.B4I100"/>
<dbReference type="EnsemblMetazoa" id="FBtr0195324">
    <property type="protein sequence ID" value="FBpp0193816"/>
    <property type="gene ID" value="FBgn0167276"/>
</dbReference>
<dbReference type="HOGENOM" id="CLU_013645_2_1_1"/>
<dbReference type="OMA" id="YLEYMGV"/>
<dbReference type="PhylomeDB" id="B4I100"/>
<dbReference type="Proteomes" id="UP000001292">
    <property type="component" value="Unassembled WGS sequence"/>
</dbReference>
<dbReference type="GO" id="GO:0005730">
    <property type="term" value="C:nucleolus"/>
    <property type="evidence" value="ECO:0007669"/>
    <property type="project" value="TreeGrafter"/>
</dbReference>
<dbReference type="GO" id="GO:0005634">
    <property type="term" value="C:nucleus"/>
    <property type="evidence" value="ECO:0000250"/>
    <property type="project" value="UniProtKB"/>
</dbReference>
<dbReference type="GO" id="GO:0016706">
    <property type="term" value="F:2-oxoglutarate-dependent dioxygenase activity"/>
    <property type="evidence" value="ECO:0000250"/>
    <property type="project" value="UniProtKB"/>
</dbReference>
<dbReference type="GO" id="GO:0051864">
    <property type="term" value="F:histone H3K36 demethylase activity"/>
    <property type="evidence" value="ECO:0000250"/>
    <property type="project" value="UniProtKB"/>
</dbReference>
<dbReference type="GO" id="GO:0140680">
    <property type="term" value="F:histone H3K36me/H3K36me2 demethylase activity"/>
    <property type="evidence" value="ECO:0007669"/>
    <property type="project" value="UniProtKB-EC"/>
</dbReference>
<dbReference type="GO" id="GO:0034647">
    <property type="term" value="F:histone H3K4me/H3K4me2/H3K4me3 demethylase activity"/>
    <property type="evidence" value="ECO:0000250"/>
    <property type="project" value="UniProtKB"/>
</dbReference>
<dbReference type="GO" id="GO:0005506">
    <property type="term" value="F:iron ion binding"/>
    <property type="evidence" value="ECO:0000250"/>
    <property type="project" value="UniProtKB"/>
</dbReference>
<dbReference type="GO" id="GO:0045892">
    <property type="term" value="P:negative regulation of DNA-templated transcription"/>
    <property type="evidence" value="ECO:0000250"/>
    <property type="project" value="UniProtKB"/>
</dbReference>
<dbReference type="FunFam" id="2.60.120.650:FF:000013">
    <property type="entry name" value="Ribosomal oxygenase 1"/>
    <property type="match status" value="1"/>
</dbReference>
<dbReference type="FunFam" id="1.10.10.1500:FF:000001">
    <property type="entry name" value="ribosomal oxygenase 1 isoform X1"/>
    <property type="match status" value="1"/>
</dbReference>
<dbReference type="FunFam" id="3.90.930.40:FF:000001">
    <property type="entry name" value="ribosomal oxygenase 1 isoform X1"/>
    <property type="match status" value="1"/>
</dbReference>
<dbReference type="Gene3D" id="3.90.930.40">
    <property type="match status" value="1"/>
</dbReference>
<dbReference type="Gene3D" id="2.60.120.650">
    <property type="entry name" value="Cupin"/>
    <property type="match status" value="1"/>
</dbReference>
<dbReference type="Gene3D" id="1.10.10.1500">
    <property type="entry name" value="JmjC domain-containing ribosomal oxygenase (ROX), dimer domain"/>
    <property type="match status" value="1"/>
</dbReference>
<dbReference type="InterPro" id="IPR003347">
    <property type="entry name" value="JmjC_dom"/>
</dbReference>
<dbReference type="InterPro" id="IPR039994">
    <property type="entry name" value="NO66-like"/>
</dbReference>
<dbReference type="InterPro" id="IPR049043">
    <property type="entry name" value="RIOX1/NO66-like_C_WH"/>
</dbReference>
<dbReference type="PANTHER" id="PTHR13096">
    <property type="entry name" value="MINA53 MYC INDUCED NUCLEAR ANTIGEN"/>
    <property type="match status" value="1"/>
</dbReference>
<dbReference type="PANTHER" id="PTHR13096:SF8">
    <property type="entry name" value="RIBOSOMAL OXYGENASE 1"/>
    <property type="match status" value="1"/>
</dbReference>
<dbReference type="Pfam" id="PF08007">
    <property type="entry name" value="JmjC_2"/>
    <property type="match status" value="1"/>
</dbReference>
<dbReference type="Pfam" id="PF21233">
    <property type="entry name" value="RIOX1_C_WH"/>
    <property type="match status" value="1"/>
</dbReference>
<dbReference type="SUPFAM" id="SSF51197">
    <property type="entry name" value="Clavaminate synthase-like"/>
    <property type="match status" value="1"/>
</dbReference>
<dbReference type="PROSITE" id="PS51184">
    <property type="entry name" value="JMJC"/>
    <property type="match status" value="1"/>
</dbReference>
<organism>
    <name type="scientific">Drosophila sechellia</name>
    <name type="common">Fruit fly</name>
    <dbReference type="NCBI Taxonomy" id="7238"/>
    <lineage>
        <taxon>Eukaryota</taxon>
        <taxon>Metazoa</taxon>
        <taxon>Ecdysozoa</taxon>
        <taxon>Arthropoda</taxon>
        <taxon>Hexapoda</taxon>
        <taxon>Insecta</taxon>
        <taxon>Pterygota</taxon>
        <taxon>Neoptera</taxon>
        <taxon>Endopterygota</taxon>
        <taxon>Diptera</taxon>
        <taxon>Brachycera</taxon>
        <taxon>Muscomorpha</taxon>
        <taxon>Ephydroidea</taxon>
        <taxon>Drosophilidae</taxon>
        <taxon>Drosophila</taxon>
        <taxon>Sophophora</taxon>
    </lineage>
</organism>
<evidence type="ECO:0000250" key="1"/>
<evidence type="ECO:0000255" key="2">
    <source>
        <dbReference type="PROSITE-ProRule" id="PRU00538"/>
    </source>
</evidence>
<evidence type="ECO:0000256" key="3">
    <source>
        <dbReference type="SAM" id="MobiDB-lite"/>
    </source>
</evidence>
<evidence type="ECO:0000305" key="4"/>
<reference key="1">
    <citation type="journal article" date="2007" name="Nature">
        <title>Evolution of genes and genomes on the Drosophila phylogeny.</title>
        <authorList>
            <consortium name="Drosophila 12 genomes consortium"/>
        </authorList>
    </citation>
    <scope>NUCLEOTIDE SEQUENCE [LARGE SCALE GENOMIC DNA]</scope>
    <source>
        <strain>Rob3c / Tucson 14021-0248.25</strain>
    </source>
</reference>
<gene>
    <name type="ORF">GM12339</name>
</gene>
<accession>B4I100</accession>
<comment type="function">
    <text evidence="1">Oxygenase that can act as both a histone lysine demethylase and a ribosomal histidine hydroxylase. Specifically demethylates 'Lys-4' (H3K4me) and 'Lys-36' (H3K36me) of histone H3, thereby playing a central role in histone code (By similarity).</text>
</comment>
<comment type="catalytic activity">
    <reaction>
        <text>N(6),N(6)-dimethyl-L-lysyl(36)-[histone H3] + 2 2-oxoglutarate + 2 O2 = L-lysyl(36)-[histone H3] + 2 formaldehyde + 2 succinate + 2 CO2</text>
        <dbReference type="Rhea" id="RHEA:42032"/>
        <dbReference type="Rhea" id="RHEA-COMP:9785"/>
        <dbReference type="Rhea" id="RHEA-COMP:9787"/>
        <dbReference type="ChEBI" id="CHEBI:15379"/>
        <dbReference type="ChEBI" id="CHEBI:16526"/>
        <dbReference type="ChEBI" id="CHEBI:16810"/>
        <dbReference type="ChEBI" id="CHEBI:16842"/>
        <dbReference type="ChEBI" id="CHEBI:29969"/>
        <dbReference type="ChEBI" id="CHEBI:30031"/>
        <dbReference type="ChEBI" id="CHEBI:61976"/>
        <dbReference type="EC" id="1.14.11.27"/>
    </reaction>
</comment>
<comment type="cofactor">
    <cofactor evidence="1">
        <name>Fe(2+)</name>
        <dbReference type="ChEBI" id="CHEBI:29033"/>
    </cofactor>
    <text evidence="1">Binds 1 Fe(2+) ion per subunit.</text>
</comment>
<comment type="subcellular location">
    <subcellularLocation>
        <location evidence="1">Nucleus</location>
    </subcellularLocation>
</comment>
<comment type="similarity">
    <text evidence="4">Belongs to the ROX family. NO66 subfamily.</text>
</comment>
<name>NO66_DROSE</name>
<feature type="chain" id="PRO_0000390990" description="Bifunctional lysine-specific demethylase and histidyl-hydroxylase NO66">
    <location>
        <begin position="1"/>
        <end position="655"/>
    </location>
</feature>
<feature type="domain" description="JmjC" evidence="2">
    <location>
        <begin position="307"/>
        <end position="452"/>
    </location>
</feature>
<feature type="region of interest" description="Disordered" evidence="3">
    <location>
        <begin position="1"/>
        <end position="48"/>
    </location>
</feature>
<feature type="region of interest" description="Disordered" evidence="3">
    <location>
        <begin position="67"/>
        <end position="122"/>
    </location>
</feature>
<feature type="region of interest" description="Disordered" evidence="3">
    <location>
        <begin position="185"/>
        <end position="210"/>
    </location>
</feature>
<feature type="compositionally biased region" description="Polar residues" evidence="3">
    <location>
        <begin position="1"/>
        <end position="16"/>
    </location>
</feature>
<feature type="compositionally biased region" description="Low complexity" evidence="3">
    <location>
        <begin position="76"/>
        <end position="86"/>
    </location>
</feature>
<feature type="compositionally biased region" description="Basic and acidic residues" evidence="3">
    <location>
        <begin position="87"/>
        <end position="96"/>
    </location>
</feature>
<feature type="compositionally biased region" description="Basic and acidic residues" evidence="3">
    <location>
        <begin position="194"/>
        <end position="210"/>
    </location>
</feature>
<feature type="binding site" evidence="2">
    <location>
        <position position="353"/>
    </location>
    <ligand>
        <name>Fe cation</name>
        <dbReference type="ChEBI" id="CHEBI:24875"/>
        <note>catalytic</note>
    </ligand>
</feature>
<feature type="binding site" evidence="2">
    <location>
        <position position="355"/>
    </location>
    <ligand>
        <name>Fe cation</name>
        <dbReference type="ChEBI" id="CHEBI:24875"/>
        <note>catalytic</note>
    </ligand>
</feature>
<feature type="binding site" evidence="2">
    <location>
        <position position="418"/>
    </location>
    <ligand>
        <name>Fe cation</name>
        <dbReference type="ChEBI" id="CHEBI:24875"/>
        <note>catalytic</note>
    </ligand>
</feature>
<feature type="modified residue" description="Phosphoserine" evidence="1">
    <location>
        <position position="131"/>
    </location>
</feature>
<feature type="modified residue" description="Phosphothreonine" evidence="1">
    <location>
        <position position="137"/>
    </location>
</feature>
<feature type="modified residue" description="Phosphoserine" evidence="1">
    <location>
        <position position="138"/>
    </location>
</feature>
<protein>
    <recommendedName>
        <fullName>Bifunctional lysine-specific demethylase and histidyl-hydroxylase NO66</fullName>
        <ecNumber>1.14.11.-</ecNumber>
        <ecNumber>1.14.11.27</ecNumber>
    </recommendedName>
    <alternativeName>
        <fullName>Histone lysine demethylase NO66</fullName>
    </alternativeName>
</protein>
<proteinExistence type="inferred from homology"/>
<sequence length="655" mass="73306">MEKVTNSAAAKPQGNNKKQESAYNGAGKDKKKPNLDIETTDSDLLSDMHLDGTTEQKVGTLFSKVFEDTDYGTGPSTSSKEAAAAKTADHERRLQAEADVNNNDAEKAGQLAKESVATQGASATERKQAFSLGLEHTSPIQVNGAALACPLVRKSLPPGEANSCPPPPKRDPAAVKSAVKIIKVKAPEEGNNNNDEKEMSTETSEPHKTDSVEEGRRVVMWIIFPIKTKFFFKYFWEQTACLVQRTNPKYFQSLISFKMLDEILIRHNLDFTVNLDVTTYKNGKRETLNPEGRALPPAVWGFYSEGCSIRLLHASAYLTRLREVCTVLQEFFHCKVGANMYLTPPNSQGFAPHYDDIEAFVIQVEGRKRWLLYDPPKEADHLARISSGNYNQEQLGKPIIDEVLSAGDVLYFPRGTVHQAITEEQQHSLHITLSVYQQQAYANLLETLMPMVLKKAVDRSVALRRGLPLHTFQILGNAYKANDCGSRQLLVENVQKLVAKYLMPSEDDIDEAVDQMAKKFQHEALPPIVLPSEEVRTVHGARSGADDQGNCVCDYKFNEKTSVRLLRANILRLVTEPDGSVRIYHHVDNGLDYCKYEPYFMEILPEKAKAVELLISAYPYYLTIDQLPLKSSARKVEVATALWEHGLLMTEKPFK</sequence>
<keyword id="KW-0156">Chromatin regulator</keyword>
<keyword id="KW-0223">Dioxygenase</keyword>
<keyword id="KW-0408">Iron</keyword>
<keyword id="KW-0479">Metal-binding</keyword>
<keyword id="KW-0539">Nucleus</keyword>
<keyword id="KW-0560">Oxidoreductase</keyword>
<keyword id="KW-0597">Phosphoprotein</keyword>
<keyword id="KW-1185">Reference proteome</keyword>
<keyword id="KW-0678">Repressor</keyword>
<keyword id="KW-0804">Transcription</keyword>
<keyword id="KW-0805">Transcription regulation</keyword>